<accession>Q4WJ02</accession>
<protein>
    <recommendedName>
        <fullName>FACT complex subunit spt16</fullName>
    </recommendedName>
    <alternativeName>
        <fullName>Facilitates chromatin transcription complex subunit spt16</fullName>
    </alternativeName>
</protein>
<keyword id="KW-0158">Chromosome</keyword>
<keyword id="KW-0175">Coiled coil</keyword>
<keyword id="KW-0227">DNA damage</keyword>
<keyword id="KW-0234">DNA repair</keyword>
<keyword id="KW-0235">DNA replication</keyword>
<keyword id="KW-0539">Nucleus</keyword>
<keyword id="KW-1185">Reference proteome</keyword>
<keyword id="KW-0804">Transcription</keyword>
<keyword id="KW-0805">Transcription regulation</keyword>
<gene>
    <name type="primary">spt16</name>
    <name type="ORF">AFUA_1G07720</name>
</gene>
<dbReference type="EMBL" id="AAHF01000007">
    <property type="protein sequence ID" value="EAL88480.1"/>
    <property type="molecule type" value="Genomic_DNA"/>
</dbReference>
<dbReference type="RefSeq" id="XP_750518.1">
    <property type="nucleotide sequence ID" value="XM_745425.1"/>
</dbReference>
<dbReference type="SMR" id="Q4WJ02"/>
<dbReference type="FunCoup" id="Q4WJ02">
    <property type="interactions" value="1305"/>
</dbReference>
<dbReference type="STRING" id="330879.Q4WJ02"/>
<dbReference type="EnsemblFungi" id="EAL88480">
    <property type="protein sequence ID" value="EAL88480"/>
    <property type="gene ID" value="AFUA_1G07720"/>
</dbReference>
<dbReference type="GeneID" id="3507777"/>
<dbReference type="KEGG" id="afm:AFUA_1G07720"/>
<dbReference type="VEuPathDB" id="FungiDB:Afu1g07720"/>
<dbReference type="eggNOG" id="KOG1189">
    <property type="taxonomic scope" value="Eukaryota"/>
</dbReference>
<dbReference type="HOGENOM" id="CLU_004627_1_0_1"/>
<dbReference type="InParanoid" id="Q4WJ02"/>
<dbReference type="OMA" id="YHINTIP"/>
<dbReference type="OrthoDB" id="10251642at2759"/>
<dbReference type="Proteomes" id="UP000002530">
    <property type="component" value="Chromosome 1"/>
</dbReference>
<dbReference type="GO" id="GO:0035101">
    <property type="term" value="C:FACT complex"/>
    <property type="evidence" value="ECO:0000318"/>
    <property type="project" value="GO_Central"/>
</dbReference>
<dbReference type="GO" id="GO:0042393">
    <property type="term" value="F:histone binding"/>
    <property type="evidence" value="ECO:0007669"/>
    <property type="project" value="EnsemblFungi"/>
</dbReference>
<dbReference type="GO" id="GO:0140713">
    <property type="term" value="F:histone chaperone activity"/>
    <property type="evidence" value="ECO:0007669"/>
    <property type="project" value="EnsemblFungi"/>
</dbReference>
<dbReference type="GO" id="GO:0031491">
    <property type="term" value="F:nucleosome binding"/>
    <property type="evidence" value="ECO:0000318"/>
    <property type="project" value="GO_Central"/>
</dbReference>
<dbReference type="GO" id="GO:0140719">
    <property type="term" value="P:constitutive heterochromatin formation"/>
    <property type="evidence" value="ECO:0007669"/>
    <property type="project" value="EnsemblFungi"/>
</dbReference>
<dbReference type="GO" id="GO:0006281">
    <property type="term" value="P:DNA repair"/>
    <property type="evidence" value="ECO:0007669"/>
    <property type="project" value="UniProtKB-KW"/>
</dbReference>
<dbReference type="GO" id="GO:0006261">
    <property type="term" value="P:DNA-templated DNA replication"/>
    <property type="evidence" value="ECO:0007669"/>
    <property type="project" value="EnsemblFungi"/>
</dbReference>
<dbReference type="GO" id="GO:0006334">
    <property type="term" value="P:nucleosome assembly"/>
    <property type="evidence" value="ECO:0007669"/>
    <property type="project" value="EnsemblFungi"/>
</dbReference>
<dbReference type="GO" id="GO:0045899">
    <property type="term" value="P:positive regulation of RNA polymerase II transcription preinitiation complex assembly"/>
    <property type="evidence" value="ECO:0007669"/>
    <property type="project" value="EnsemblFungi"/>
</dbReference>
<dbReference type="GO" id="GO:0007063">
    <property type="term" value="P:regulation of sister chromatid cohesion"/>
    <property type="evidence" value="ECO:0007669"/>
    <property type="project" value="EnsemblFungi"/>
</dbReference>
<dbReference type="GO" id="GO:0006368">
    <property type="term" value="P:transcription elongation by RNA polymerase II"/>
    <property type="evidence" value="ECO:0000318"/>
    <property type="project" value="GO_Central"/>
</dbReference>
<dbReference type="CDD" id="cd01091">
    <property type="entry name" value="CDC68-like"/>
    <property type="match status" value="1"/>
</dbReference>
<dbReference type="FunFam" id="2.30.29.150:FF:000002">
    <property type="entry name" value="FACT complex subunit SPT16"/>
    <property type="match status" value="1"/>
</dbReference>
<dbReference type="FunFam" id="2.30.29.30:FF:000017">
    <property type="entry name" value="FACT complex subunit SPT16"/>
    <property type="match status" value="1"/>
</dbReference>
<dbReference type="FunFam" id="3.40.350.10:FF:000006">
    <property type="entry name" value="FACT complex subunit SPT16"/>
    <property type="match status" value="1"/>
</dbReference>
<dbReference type="FunFam" id="2.30.29.210:FF:000001">
    <property type="entry name" value="FACT complex subunit spt16"/>
    <property type="match status" value="1"/>
</dbReference>
<dbReference type="FunFam" id="3.90.230.10:FF:000005">
    <property type="entry name" value="FACT complex subunit spt16"/>
    <property type="match status" value="1"/>
</dbReference>
<dbReference type="Gene3D" id="2.30.29.150">
    <property type="match status" value="1"/>
</dbReference>
<dbReference type="Gene3D" id="3.90.230.10">
    <property type="entry name" value="Creatinase/methionine aminopeptidase superfamily"/>
    <property type="match status" value="1"/>
</dbReference>
<dbReference type="Gene3D" id="3.40.350.10">
    <property type="entry name" value="Creatinase/prolidase N-terminal domain"/>
    <property type="match status" value="1"/>
</dbReference>
<dbReference type="Gene3D" id="2.30.29.210">
    <property type="entry name" value="FACT complex subunit Spt16p/Cdc68p"/>
    <property type="match status" value="1"/>
</dbReference>
<dbReference type="Gene3D" id="2.30.29.30">
    <property type="entry name" value="Pleckstrin-homology domain (PH domain)/Phosphotyrosine-binding domain (PTB)"/>
    <property type="match status" value="1"/>
</dbReference>
<dbReference type="InterPro" id="IPR029149">
    <property type="entry name" value="Creatin/AminoP/Spt16_N"/>
</dbReference>
<dbReference type="InterPro" id="IPR036005">
    <property type="entry name" value="Creatinase/aminopeptidase-like"/>
</dbReference>
<dbReference type="InterPro" id="IPR029148">
    <property type="entry name" value="FACT-SPT16_Nlobe"/>
</dbReference>
<dbReference type="InterPro" id="IPR056595">
    <property type="entry name" value="Fact-SPT16_PH"/>
</dbReference>
<dbReference type="InterPro" id="IPR048969">
    <property type="entry name" value="FACT_SPT16_C"/>
</dbReference>
<dbReference type="InterPro" id="IPR013953">
    <property type="entry name" value="FACT_SPT16_M"/>
</dbReference>
<dbReference type="InterPro" id="IPR000994">
    <property type="entry name" value="Pept_M24"/>
</dbReference>
<dbReference type="InterPro" id="IPR011993">
    <property type="entry name" value="PH-like_dom_sf"/>
</dbReference>
<dbReference type="InterPro" id="IPR013719">
    <property type="entry name" value="RTT106/SPT16-like_middle_dom"/>
</dbReference>
<dbReference type="InterPro" id="IPR040258">
    <property type="entry name" value="Spt16"/>
</dbReference>
<dbReference type="InterPro" id="IPR033825">
    <property type="entry name" value="Spt16_M24"/>
</dbReference>
<dbReference type="PANTHER" id="PTHR13980">
    <property type="entry name" value="CDC68 RELATED"/>
    <property type="match status" value="1"/>
</dbReference>
<dbReference type="PANTHER" id="PTHR13980:SF15">
    <property type="entry name" value="FACT COMPLEX SUBUNIT SPT16"/>
    <property type="match status" value="1"/>
</dbReference>
<dbReference type="Pfam" id="PF14826">
    <property type="entry name" value="FACT-Spt16_Nlob"/>
    <property type="match status" value="1"/>
</dbReference>
<dbReference type="Pfam" id="PF00557">
    <property type="entry name" value="Peptidase_M24"/>
    <property type="match status" value="1"/>
</dbReference>
<dbReference type="Pfam" id="PF24824">
    <property type="entry name" value="PH_SPT16"/>
    <property type="match status" value="1"/>
</dbReference>
<dbReference type="Pfam" id="PF08512">
    <property type="entry name" value="Rttp106-like_middle"/>
    <property type="match status" value="1"/>
</dbReference>
<dbReference type="Pfam" id="PF08644">
    <property type="entry name" value="SPT16"/>
    <property type="match status" value="1"/>
</dbReference>
<dbReference type="Pfam" id="PF21091">
    <property type="entry name" value="SPT16_C"/>
    <property type="match status" value="1"/>
</dbReference>
<dbReference type="SMART" id="SM01285">
    <property type="entry name" value="FACT-Spt16_Nlob"/>
    <property type="match status" value="1"/>
</dbReference>
<dbReference type="SMART" id="SM01287">
    <property type="entry name" value="Rtt106"/>
    <property type="match status" value="1"/>
</dbReference>
<dbReference type="SMART" id="SM01286">
    <property type="entry name" value="SPT16"/>
    <property type="match status" value="1"/>
</dbReference>
<dbReference type="SUPFAM" id="SSF55920">
    <property type="entry name" value="Creatinase/aminopeptidase"/>
    <property type="match status" value="1"/>
</dbReference>
<sequence>MAEEIVIDKTLFFNRLSSFYAAWRADKRSSHPTFGGVGSIVILMGKTDEASTFQKNNAMHFWLLGYEFPATLLVFTLEAVYVVTTAKKAKHLEPLRGGKIPVEILITTKDPEGKLRSFEKCIEVIRSAGNKVGVLPKDTTTGPFAEDWKRTFAMLSAEIEEVDISPALSAAFAVKDTDELVSIRNASRACSGLMSEYFVEEMSRLLDEEKQMTHKALSARVDAKIDDAKFFNKLGKLPAEFDAQQIDWAYGPVIQSGGKYDLRLTAVSDNSNLEPGIIIAGFGIRYKTYSSMIARTYLVDPSKSQETNYAFLLALHEAVMRDVRDGTIAKDLYNKAINLIRTKKPELESHFVKSVGAGIGIELRDPNMVLNGKNSRTLKSGMTLSITVGLTDVEDPELKGSKSSTYSMIITDTVRVGENGPHVFTKDAGLDMDSVSFYFGDEEEPQKPIKEKKEAKTSAIASRNITRTKLRAERPTQINEGAEARRREHQKELAAKKTREGLDRFAGTTGDDNGVTQKKFKRFESYKRDNQLPTKVRELTIYVDQKASTVIVPIMGRPVPFHINTIKNASKSDEGEYAYLRINFLSPGQGVGRKDDQPFEDLSAHFLRNLTLRSKDNERLAQVAQDITELRKNALRREQEKKEMEDVVEQDKLIEIRNRRPVKLPDVYLRPPLDGKRVPGEVEIHQNGLRYMSPFRNEHVDVLFSNVKHLFFQPCAHELIVLIHVHLKTPIMIGKRKTRDVQFYREATEMQFDETGNRRRKHRYGDEEEFEAEQEERRRRAALDREFKAFAEKIADAGKDEGVDVDIPFREIGFTGVPNRSNVLIQPTTDALVQLTEPPFLVITLNEIEIAHLERVQFGLKNFDLVFVFKDFHRAPVHINTIPVESLEGVKDWLDSVDIAFTEGPLNLNWTTIMKTVVSDPYGFFADGGWSFLAAESDSEDGSEEEEESAFELSESELAAADESSEDDSEFDDDASAEASDFSAEEESGEDWDELERKAKKKDREGGLDDEEHGKKRKR</sequence>
<organism>
    <name type="scientific">Aspergillus fumigatus (strain ATCC MYA-4609 / CBS 101355 / FGSC A1100 / Af293)</name>
    <name type="common">Neosartorya fumigata</name>
    <dbReference type="NCBI Taxonomy" id="330879"/>
    <lineage>
        <taxon>Eukaryota</taxon>
        <taxon>Fungi</taxon>
        <taxon>Dikarya</taxon>
        <taxon>Ascomycota</taxon>
        <taxon>Pezizomycotina</taxon>
        <taxon>Eurotiomycetes</taxon>
        <taxon>Eurotiomycetidae</taxon>
        <taxon>Eurotiales</taxon>
        <taxon>Aspergillaceae</taxon>
        <taxon>Aspergillus</taxon>
        <taxon>Aspergillus subgen. Fumigati</taxon>
    </lineage>
</organism>
<comment type="function">
    <text evidence="1">Component of the FACT complex, a general chromatin factor that acts to reorganize nucleosomes. The FACT complex is involved in multiple processes that require DNA as a template such as mRNA elongation, DNA replication and DNA repair. During transcription elongation the FACT complex acts as a histone chaperone that both destabilizes and restores nucleosomal structure. It facilitates the passage of RNA polymerase II and transcription by promoting the dissociation of one histone H2A-H2B dimer from the nucleosome, then subsequently promotes the reestablishment of the nucleosome following the passage of RNA polymerase II (By similarity).</text>
</comment>
<comment type="subunit">
    <text evidence="1">Forms a stable heterodimer with pob3. The spt16-pob3 dimer weakly associates with multiple molecules of nhp6 to form the FACT complex (By similarity).</text>
</comment>
<comment type="subcellular location">
    <subcellularLocation>
        <location evidence="1">Nucleus</location>
    </subcellularLocation>
    <subcellularLocation>
        <location evidence="1">Chromosome</location>
    </subcellularLocation>
</comment>
<comment type="similarity">
    <text evidence="4">Belongs to the peptidase M24 family. SPT16 subfamily.</text>
</comment>
<comment type="caution">
    <text evidence="4">Although related to the peptidase M24 family, this protein lacks conserved active site residues suggesting that it may lack peptidase activity.</text>
</comment>
<feature type="chain" id="PRO_0000245179" description="FACT complex subunit spt16">
    <location>
        <begin position="1"/>
        <end position="1019"/>
    </location>
</feature>
<feature type="region of interest" description="Disordered" evidence="3">
    <location>
        <begin position="754"/>
        <end position="773"/>
    </location>
</feature>
<feature type="region of interest" description="Disordered" evidence="3">
    <location>
        <begin position="935"/>
        <end position="1019"/>
    </location>
</feature>
<feature type="coiled-coil region" evidence="2">
    <location>
        <begin position="476"/>
        <end position="500"/>
    </location>
</feature>
<feature type="coiled-coil region" evidence="2">
    <location>
        <begin position="614"/>
        <end position="650"/>
    </location>
</feature>
<feature type="coiled-coil region" evidence="2">
    <location>
        <begin position="774"/>
        <end position="797"/>
    </location>
</feature>
<feature type="compositionally biased region" description="Acidic residues" evidence="3">
    <location>
        <begin position="937"/>
        <end position="950"/>
    </location>
</feature>
<feature type="compositionally biased region" description="Low complexity" evidence="3">
    <location>
        <begin position="951"/>
        <end position="962"/>
    </location>
</feature>
<feature type="compositionally biased region" description="Acidic residues" evidence="3">
    <location>
        <begin position="963"/>
        <end position="976"/>
    </location>
</feature>
<feature type="compositionally biased region" description="Acidic residues" evidence="3">
    <location>
        <begin position="983"/>
        <end position="994"/>
    </location>
</feature>
<evidence type="ECO:0000250" key="1"/>
<evidence type="ECO:0000255" key="2"/>
<evidence type="ECO:0000256" key="3">
    <source>
        <dbReference type="SAM" id="MobiDB-lite"/>
    </source>
</evidence>
<evidence type="ECO:0000305" key="4"/>
<proteinExistence type="inferred from homology"/>
<reference key="1">
    <citation type="journal article" date="2005" name="Nature">
        <title>Genomic sequence of the pathogenic and allergenic filamentous fungus Aspergillus fumigatus.</title>
        <authorList>
            <person name="Nierman W.C."/>
            <person name="Pain A."/>
            <person name="Anderson M.J."/>
            <person name="Wortman J.R."/>
            <person name="Kim H.S."/>
            <person name="Arroyo J."/>
            <person name="Berriman M."/>
            <person name="Abe K."/>
            <person name="Archer D.B."/>
            <person name="Bermejo C."/>
            <person name="Bennett J.W."/>
            <person name="Bowyer P."/>
            <person name="Chen D."/>
            <person name="Collins M."/>
            <person name="Coulsen R."/>
            <person name="Davies R."/>
            <person name="Dyer P.S."/>
            <person name="Farman M.L."/>
            <person name="Fedorova N."/>
            <person name="Fedorova N.D."/>
            <person name="Feldblyum T.V."/>
            <person name="Fischer R."/>
            <person name="Fosker N."/>
            <person name="Fraser A."/>
            <person name="Garcia J.L."/>
            <person name="Garcia M.J."/>
            <person name="Goble A."/>
            <person name="Goldman G.H."/>
            <person name="Gomi K."/>
            <person name="Griffith-Jones S."/>
            <person name="Gwilliam R."/>
            <person name="Haas B.J."/>
            <person name="Haas H."/>
            <person name="Harris D.E."/>
            <person name="Horiuchi H."/>
            <person name="Huang J."/>
            <person name="Humphray S."/>
            <person name="Jimenez J."/>
            <person name="Keller N."/>
            <person name="Khouri H."/>
            <person name="Kitamoto K."/>
            <person name="Kobayashi T."/>
            <person name="Konzack S."/>
            <person name="Kulkarni R."/>
            <person name="Kumagai T."/>
            <person name="Lafton A."/>
            <person name="Latge J.-P."/>
            <person name="Li W."/>
            <person name="Lord A."/>
            <person name="Lu C."/>
            <person name="Majoros W.H."/>
            <person name="May G.S."/>
            <person name="Miller B.L."/>
            <person name="Mohamoud Y."/>
            <person name="Molina M."/>
            <person name="Monod M."/>
            <person name="Mouyna I."/>
            <person name="Mulligan S."/>
            <person name="Murphy L.D."/>
            <person name="O'Neil S."/>
            <person name="Paulsen I."/>
            <person name="Penalva M.A."/>
            <person name="Pertea M."/>
            <person name="Price C."/>
            <person name="Pritchard B.L."/>
            <person name="Quail M.A."/>
            <person name="Rabbinowitsch E."/>
            <person name="Rawlins N."/>
            <person name="Rajandream M.A."/>
            <person name="Reichard U."/>
            <person name="Renauld H."/>
            <person name="Robson G.D."/>
            <person name="Rodriguez de Cordoba S."/>
            <person name="Rodriguez-Pena J.M."/>
            <person name="Ronning C.M."/>
            <person name="Rutter S."/>
            <person name="Salzberg S.L."/>
            <person name="Sanchez M."/>
            <person name="Sanchez-Ferrero J.C."/>
            <person name="Saunders D."/>
            <person name="Seeger K."/>
            <person name="Squares R."/>
            <person name="Squares S."/>
            <person name="Takeuchi M."/>
            <person name="Tekaia F."/>
            <person name="Turner G."/>
            <person name="Vazquez de Aldana C.R."/>
            <person name="Weidman J."/>
            <person name="White O."/>
            <person name="Woodward J.R."/>
            <person name="Yu J.-H."/>
            <person name="Fraser C.M."/>
            <person name="Galagan J.E."/>
            <person name="Asai K."/>
            <person name="Machida M."/>
            <person name="Hall N."/>
            <person name="Barrell B.G."/>
            <person name="Denning D.W."/>
        </authorList>
    </citation>
    <scope>NUCLEOTIDE SEQUENCE [LARGE SCALE GENOMIC DNA]</scope>
    <source>
        <strain>ATCC MYA-4609 / CBS 101355 / FGSC A1100 / Af293</strain>
    </source>
</reference>
<name>SPT16_ASPFU</name>